<feature type="chain" id="PRO_0000411792" description="Probable Xaa-Pro aminopeptidase P">
    <location>
        <begin position="1"/>
        <end position="642"/>
    </location>
</feature>
<feature type="binding site" evidence="1">
    <location>
        <position position="439"/>
    </location>
    <ligand>
        <name>Mn(2+)</name>
        <dbReference type="ChEBI" id="CHEBI:29035"/>
        <label>2</label>
    </ligand>
</feature>
<feature type="binding site" evidence="1">
    <location>
        <position position="450"/>
    </location>
    <ligand>
        <name>Mn(2+)</name>
        <dbReference type="ChEBI" id="CHEBI:29035"/>
        <label>1</label>
    </ligand>
</feature>
<feature type="binding site" evidence="1">
    <location>
        <position position="450"/>
    </location>
    <ligand>
        <name>Mn(2+)</name>
        <dbReference type="ChEBI" id="CHEBI:29035"/>
        <label>2</label>
    </ligand>
</feature>
<feature type="binding site" evidence="1">
    <location>
        <position position="548"/>
    </location>
    <ligand>
        <name>Mn(2+)</name>
        <dbReference type="ChEBI" id="CHEBI:29035"/>
        <label>1</label>
    </ligand>
</feature>
<feature type="binding site" evidence="1">
    <location>
        <position position="562"/>
    </location>
    <ligand>
        <name>Mn(2+)</name>
        <dbReference type="ChEBI" id="CHEBI:29035"/>
        <label>1</label>
    </ligand>
</feature>
<feature type="binding site" evidence="1">
    <location>
        <position position="562"/>
    </location>
    <ligand>
        <name>Mn(2+)</name>
        <dbReference type="ChEBI" id="CHEBI:29035"/>
        <label>2</label>
    </ligand>
</feature>
<proteinExistence type="inferred from homology"/>
<name>AMPP1_LACBS</name>
<protein>
    <recommendedName>
        <fullName>Probable Xaa-Pro aminopeptidase P</fullName>
        <shortName>AMPP</shortName>
        <shortName>Aminopeptidase P</shortName>
        <ecNumber>3.4.11.9</ecNumber>
    </recommendedName>
    <alternativeName>
        <fullName>Aminoacylproline aminopeptidase</fullName>
    </alternativeName>
    <alternativeName>
        <fullName>Prolidase</fullName>
    </alternativeName>
</protein>
<dbReference type="EC" id="3.4.11.9"/>
<dbReference type="EMBL" id="DS547156">
    <property type="protein sequence ID" value="EDQ99959.1"/>
    <property type="molecule type" value="Genomic_DNA"/>
</dbReference>
<dbReference type="RefSeq" id="XP_001889370.1">
    <property type="nucleotide sequence ID" value="XM_001889335.1"/>
</dbReference>
<dbReference type="SMR" id="B0DZL3"/>
<dbReference type="FunCoup" id="B0DZL3">
    <property type="interactions" value="385"/>
</dbReference>
<dbReference type="STRING" id="486041.B0DZL3"/>
<dbReference type="MEROPS" id="M24.009"/>
<dbReference type="GeneID" id="6085051"/>
<dbReference type="KEGG" id="lbc:LACBIDRAFT_315028"/>
<dbReference type="HOGENOM" id="CLU_011781_2_3_1"/>
<dbReference type="InParanoid" id="B0DZL3"/>
<dbReference type="OrthoDB" id="9995434at2759"/>
<dbReference type="Proteomes" id="UP000001194">
    <property type="component" value="Unassembled WGS sequence"/>
</dbReference>
<dbReference type="GO" id="GO:0005737">
    <property type="term" value="C:cytoplasm"/>
    <property type="evidence" value="ECO:0007669"/>
    <property type="project" value="UniProtKB-ARBA"/>
</dbReference>
<dbReference type="GO" id="GO:0046872">
    <property type="term" value="F:metal ion binding"/>
    <property type="evidence" value="ECO:0007669"/>
    <property type="project" value="UniProtKB-KW"/>
</dbReference>
<dbReference type="GO" id="GO:0070006">
    <property type="term" value="F:metalloaminopeptidase activity"/>
    <property type="evidence" value="ECO:0007669"/>
    <property type="project" value="InterPro"/>
</dbReference>
<dbReference type="GO" id="GO:0006508">
    <property type="term" value="P:proteolysis"/>
    <property type="evidence" value="ECO:0007669"/>
    <property type="project" value="UniProtKB-KW"/>
</dbReference>
<dbReference type="CDD" id="cd01085">
    <property type="entry name" value="APP"/>
    <property type="match status" value="1"/>
</dbReference>
<dbReference type="FunFam" id="3.90.230.10:FF:000007">
    <property type="entry name" value="Xaa-Pro aminopeptidase P"/>
    <property type="match status" value="1"/>
</dbReference>
<dbReference type="FunFam" id="3.40.350.10:FF:000003">
    <property type="entry name" value="Xaa-pro aminopeptidase P"/>
    <property type="match status" value="1"/>
</dbReference>
<dbReference type="Gene3D" id="3.90.230.10">
    <property type="entry name" value="Creatinase/methionine aminopeptidase superfamily"/>
    <property type="match status" value="1"/>
</dbReference>
<dbReference type="Gene3D" id="3.40.350.10">
    <property type="entry name" value="Creatinase/prolidase N-terminal domain"/>
    <property type="match status" value="2"/>
</dbReference>
<dbReference type="InterPro" id="IPR029149">
    <property type="entry name" value="Creatin/AminoP/Spt16_N"/>
</dbReference>
<dbReference type="InterPro" id="IPR036005">
    <property type="entry name" value="Creatinase/aminopeptidase-like"/>
</dbReference>
<dbReference type="InterPro" id="IPR000587">
    <property type="entry name" value="Creatinase_N"/>
</dbReference>
<dbReference type="InterPro" id="IPR000994">
    <property type="entry name" value="Pept_M24"/>
</dbReference>
<dbReference type="InterPro" id="IPR033740">
    <property type="entry name" value="Pept_M24B"/>
</dbReference>
<dbReference type="InterPro" id="IPR032416">
    <property type="entry name" value="Peptidase_M24_C"/>
</dbReference>
<dbReference type="InterPro" id="IPR050422">
    <property type="entry name" value="X-Pro_aminopeptidase_P"/>
</dbReference>
<dbReference type="PANTHER" id="PTHR43763">
    <property type="entry name" value="XAA-PRO AMINOPEPTIDASE 1"/>
    <property type="match status" value="1"/>
</dbReference>
<dbReference type="PANTHER" id="PTHR43763:SF6">
    <property type="entry name" value="XAA-PRO AMINOPEPTIDASE 1"/>
    <property type="match status" value="1"/>
</dbReference>
<dbReference type="Pfam" id="PF01321">
    <property type="entry name" value="Creatinase_N"/>
    <property type="match status" value="1"/>
</dbReference>
<dbReference type="Pfam" id="PF16189">
    <property type="entry name" value="Creatinase_N_2"/>
    <property type="match status" value="1"/>
</dbReference>
<dbReference type="Pfam" id="PF00557">
    <property type="entry name" value="Peptidase_M24"/>
    <property type="match status" value="1"/>
</dbReference>
<dbReference type="Pfam" id="PF16188">
    <property type="entry name" value="Peptidase_M24_C"/>
    <property type="match status" value="1"/>
</dbReference>
<dbReference type="SUPFAM" id="SSF55920">
    <property type="entry name" value="Creatinase/aminopeptidase"/>
    <property type="match status" value="1"/>
</dbReference>
<dbReference type="SUPFAM" id="SSF53092">
    <property type="entry name" value="Creatinase/prolidase N-terminal domain"/>
    <property type="match status" value="2"/>
</dbReference>
<comment type="function">
    <text evidence="1">Catalyzes the removal of a penultimate prolyl residue from the N-termini of peptides.</text>
</comment>
<comment type="catalytic activity">
    <reaction>
        <text>Release of any N-terminal amino acid, including proline, that is linked to proline, even from a dipeptide or tripeptide.</text>
        <dbReference type="EC" id="3.4.11.9"/>
    </reaction>
</comment>
<comment type="cofactor">
    <cofactor evidence="1">
        <name>Mn(2+)</name>
        <dbReference type="ChEBI" id="CHEBI:29035"/>
    </cofactor>
    <text evidence="1">Binds 2 manganese ions per subunit.</text>
</comment>
<comment type="similarity">
    <text evidence="2">Belongs to the peptidase M24B family.</text>
</comment>
<gene>
    <name type="primary">AMPP</name>
    <name type="ORF">LACBIDRAFT_315028</name>
</gene>
<evidence type="ECO:0000250" key="1"/>
<evidence type="ECO:0000305" key="2"/>
<accession>B0DZL3</accession>
<keyword id="KW-0031">Aminopeptidase</keyword>
<keyword id="KW-0378">Hydrolase</keyword>
<keyword id="KW-0464">Manganese</keyword>
<keyword id="KW-0479">Metal-binding</keyword>
<keyword id="KW-0482">Metalloprotease</keyword>
<keyword id="KW-0645">Protease</keyword>
<keyword id="KW-1185">Reference proteome</keyword>
<organism>
    <name type="scientific">Laccaria bicolor (strain S238N-H82 / ATCC MYA-4686)</name>
    <name type="common">Bicoloured deceiver</name>
    <name type="synonym">Laccaria laccata var. bicolor</name>
    <dbReference type="NCBI Taxonomy" id="486041"/>
    <lineage>
        <taxon>Eukaryota</taxon>
        <taxon>Fungi</taxon>
        <taxon>Dikarya</taxon>
        <taxon>Basidiomycota</taxon>
        <taxon>Agaricomycotina</taxon>
        <taxon>Agaricomycetes</taxon>
        <taxon>Agaricomycetidae</taxon>
        <taxon>Agaricales</taxon>
        <taxon>Agaricineae</taxon>
        <taxon>Hydnangiaceae</taxon>
        <taxon>Laccaria</taxon>
    </lineage>
</organism>
<reference key="1">
    <citation type="journal article" date="2008" name="Nature">
        <title>The genome of Laccaria bicolor provides insights into mycorrhizal symbiosis.</title>
        <authorList>
            <person name="Martin F."/>
            <person name="Aerts A."/>
            <person name="Ahren D."/>
            <person name="Brun A."/>
            <person name="Danchin E.G.J."/>
            <person name="Duchaussoy F."/>
            <person name="Gibon J."/>
            <person name="Kohler A."/>
            <person name="Lindquist E."/>
            <person name="Pereda V."/>
            <person name="Salamov A."/>
            <person name="Shapiro H.J."/>
            <person name="Wuyts J."/>
            <person name="Blaudez D."/>
            <person name="Buee M."/>
            <person name="Brokstein P."/>
            <person name="Canbaeck B."/>
            <person name="Cohen D."/>
            <person name="Courty P.E."/>
            <person name="Coutinho P.M."/>
            <person name="Delaruelle C."/>
            <person name="Detter J.C."/>
            <person name="Deveau A."/>
            <person name="DiFazio S."/>
            <person name="Duplessis S."/>
            <person name="Fraissinet-Tachet L."/>
            <person name="Lucic E."/>
            <person name="Frey-Klett P."/>
            <person name="Fourrey C."/>
            <person name="Feussner I."/>
            <person name="Gay G."/>
            <person name="Grimwood J."/>
            <person name="Hoegger P.J."/>
            <person name="Jain P."/>
            <person name="Kilaru S."/>
            <person name="Labbe J."/>
            <person name="Lin Y.C."/>
            <person name="Legue V."/>
            <person name="Le Tacon F."/>
            <person name="Marmeisse R."/>
            <person name="Melayah D."/>
            <person name="Montanini B."/>
            <person name="Muratet M."/>
            <person name="Nehls U."/>
            <person name="Niculita-Hirzel H."/>
            <person name="Oudot-Le Secq M.P."/>
            <person name="Peter M."/>
            <person name="Quesneville H."/>
            <person name="Rajashekar B."/>
            <person name="Reich M."/>
            <person name="Rouhier N."/>
            <person name="Schmutz J."/>
            <person name="Yin T."/>
            <person name="Chalot M."/>
            <person name="Henrissat B."/>
            <person name="Kuees U."/>
            <person name="Lucas S."/>
            <person name="Van de Peer Y."/>
            <person name="Podila G.K."/>
            <person name="Polle A."/>
            <person name="Pukkila P.J."/>
            <person name="Richardson P.M."/>
            <person name="Rouze P."/>
            <person name="Sanders I.R."/>
            <person name="Stajich J.E."/>
            <person name="Tunlid A."/>
            <person name="Tuskan G."/>
            <person name="Grigoriev I.V."/>
        </authorList>
    </citation>
    <scope>NUCLEOTIDE SEQUENCE [LARGE SCALE GENOMIC DNA]</scope>
    <source>
        <strain>S238N-H82 / ATCC MYA-4686</strain>
    </source>
</reference>
<sequence length="642" mass="72173">MWRAIWLRISEKGLRRPPPPSLRTVTTSCTTMGADGVHTVNTTERLAKLRELMKQHSVQAFVVPSEDQHSSEYLANCDKRRAFISGFDGSAGCAIITTDKAYLFTDGRYFLQAEKQLDKNWKLMKQGLPDVPTWQDFLYKNLGPHTQIGIDATLLAASDAESLTKQLTPKYSKLVSLKENLVDVVWGEDRPSRPQNSVFHLDVKYSGQSHLDKIATLREEMKKKKAEAIVVTMLDEVAWLLNLRGSDIEYNPVFFAYAVVTMDEVILFIDSAQLDDTARHNLEHVYTMPYEAIFEHLNSLSRTLELDRDSKVLIGDRASLAVADAIGKDNYTIVRSPIADLKAIKNKTELEGFRQSHIRDGAALVRYFAWLEEQLNHGTVINESQGADKLEAFRSELDLFRGLSFDTISGTGPNGAIIHYKPDPNDCAIIKKDQVYLCDSGGQFLDGTTDVTRTWHFGTPTDEEKRAFTRVLQGHIAIDTAVFPNGTTGYVIDAFARRALWQDGLDYRHGTGHGVGHFLNVHEGPHGIGVRIALNNTPLKAGMTVSNEPGYYADGKFGIRIESIVLVREVKTPNNFGDKGYLGFENVTMCPIHKNLVDVSLLNEQEKKWLDEYHAETWDKVSPLLKGDTRALEWLRRECSPL</sequence>